<sequence>MTEFDLSTREGRWKHFGSVDPIEGTKPTTKNEMTDLQSTHKDFLFEIEEVGIKNLVYPVLVDQYQTAGTFSFSTSLTKDEKGINMSRIIESVEKHYDNGIELEFNTLYQVLRTLQTNMKQNAAGVDVSGKWFFDRYSPTTNIKAVGNADVTYGLAIDGDKVTRKELTIEATVTTLCPCSKEISEYSAHNQRGVVTVKTYINKDQNIVDDYKNKILDAMEANASSILYPILKRPDEKRVTERAYENPRFVEDLIRLIAADLVEFDWLDGFDIECRNEESIHQHDAFAKLKYRK</sequence>
<evidence type="ECO:0000255" key="1">
    <source>
        <dbReference type="HAMAP-Rule" id="MF_01527"/>
    </source>
</evidence>
<comment type="function">
    <text evidence="1">Converts GTP to 7,8-dihydroneopterin triphosphate.</text>
</comment>
<comment type="catalytic activity">
    <reaction evidence="1">
        <text>GTP + H2O = 7,8-dihydroneopterin 3'-triphosphate + formate + H(+)</text>
        <dbReference type="Rhea" id="RHEA:17473"/>
        <dbReference type="ChEBI" id="CHEBI:15377"/>
        <dbReference type="ChEBI" id="CHEBI:15378"/>
        <dbReference type="ChEBI" id="CHEBI:15740"/>
        <dbReference type="ChEBI" id="CHEBI:37565"/>
        <dbReference type="ChEBI" id="CHEBI:58462"/>
        <dbReference type="EC" id="3.5.4.16"/>
    </reaction>
</comment>
<comment type="pathway">
    <text evidence="1">Cofactor biosynthesis; 7,8-dihydroneopterin triphosphate biosynthesis; 7,8-dihydroneopterin triphosphate from GTP: step 1/1.</text>
</comment>
<comment type="similarity">
    <text evidence="1">Belongs to the GTP cyclohydrolase IV family.</text>
</comment>
<dbReference type="EC" id="3.5.4.16" evidence="1"/>
<dbReference type="EMBL" id="BA000018">
    <property type="protein sequence ID" value="BAB41755.1"/>
    <property type="molecule type" value="Genomic_DNA"/>
</dbReference>
<dbReference type="PIR" id="H89824">
    <property type="entry name" value="H89824"/>
</dbReference>
<dbReference type="RefSeq" id="WP_000134236.1">
    <property type="nucleotide sequence ID" value="NC_002745.2"/>
</dbReference>
<dbReference type="SMR" id="Q7A777"/>
<dbReference type="EnsemblBacteria" id="BAB41755">
    <property type="protein sequence ID" value="BAB41755"/>
    <property type="gene ID" value="BAB41755"/>
</dbReference>
<dbReference type="KEGG" id="sau:SA0524"/>
<dbReference type="HOGENOM" id="CLU_062816_1_1_9"/>
<dbReference type="UniPathway" id="UPA00848">
    <property type="reaction ID" value="UER00151"/>
</dbReference>
<dbReference type="GO" id="GO:0003934">
    <property type="term" value="F:GTP cyclohydrolase I activity"/>
    <property type="evidence" value="ECO:0007669"/>
    <property type="project" value="UniProtKB-UniRule"/>
</dbReference>
<dbReference type="GO" id="GO:0046654">
    <property type="term" value="P:tetrahydrofolate biosynthetic process"/>
    <property type="evidence" value="ECO:0007669"/>
    <property type="project" value="UniProtKB-UniRule"/>
</dbReference>
<dbReference type="Gene3D" id="3.10.270.10">
    <property type="entry name" value="Urate Oxidase"/>
    <property type="match status" value="1"/>
</dbReference>
<dbReference type="HAMAP" id="MF_01527_B">
    <property type="entry name" value="GTP_cyclohydrol_B"/>
    <property type="match status" value="1"/>
</dbReference>
<dbReference type="InterPro" id="IPR022838">
    <property type="entry name" value="GTP_cyclohydrolase_FolE2"/>
</dbReference>
<dbReference type="InterPro" id="IPR003801">
    <property type="entry name" value="GTP_cyclohydrolase_FolE2/MptA"/>
</dbReference>
<dbReference type="NCBIfam" id="NF010200">
    <property type="entry name" value="PRK13674.1-1"/>
    <property type="match status" value="1"/>
</dbReference>
<dbReference type="PANTHER" id="PTHR36445">
    <property type="entry name" value="GTP CYCLOHYDROLASE MPTA"/>
    <property type="match status" value="1"/>
</dbReference>
<dbReference type="PANTHER" id="PTHR36445:SF1">
    <property type="entry name" value="GTP CYCLOHYDROLASE MPTA"/>
    <property type="match status" value="1"/>
</dbReference>
<dbReference type="Pfam" id="PF02649">
    <property type="entry name" value="GCHY-1"/>
    <property type="match status" value="1"/>
</dbReference>
<accession>Q7A777</accession>
<feature type="chain" id="PRO_0000147726" description="GTP cyclohydrolase FolE2">
    <location>
        <begin position="1"/>
        <end position="292"/>
    </location>
</feature>
<feature type="site" description="May be catalytically important" evidence="1">
    <location>
        <position position="176"/>
    </location>
</feature>
<reference key="1">
    <citation type="journal article" date="2001" name="Lancet">
        <title>Whole genome sequencing of meticillin-resistant Staphylococcus aureus.</title>
        <authorList>
            <person name="Kuroda M."/>
            <person name="Ohta T."/>
            <person name="Uchiyama I."/>
            <person name="Baba T."/>
            <person name="Yuzawa H."/>
            <person name="Kobayashi I."/>
            <person name="Cui L."/>
            <person name="Oguchi A."/>
            <person name="Aoki K."/>
            <person name="Nagai Y."/>
            <person name="Lian J.-Q."/>
            <person name="Ito T."/>
            <person name="Kanamori M."/>
            <person name="Matsumaru H."/>
            <person name="Maruyama A."/>
            <person name="Murakami H."/>
            <person name="Hosoyama A."/>
            <person name="Mizutani-Ui Y."/>
            <person name="Takahashi N.K."/>
            <person name="Sawano T."/>
            <person name="Inoue R."/>
            <person name="Kaito C."/>
            <person name="Sekimizu K."/>
            <person name="Hirakawa H."/>
            <person name="Kuhara S."/>
            <person name="Goto S."/>
            <person name="Yabuzaki J."/>
            <person name="Kanehisa M."/>
            <person name="Yamashita A."/>
            <person name="Oshima K."/>
            <person name="Furuya K."/>
            <person name="Yoshino C."/>
            <person name="Shiba T."/>
            <person name="Hattori M."/>
            <person name="Ogasawara N."/>
            <person name="Hayashi H."/>
            <person name="Hiramatsu K."/>
        </authorList>
    </citation>
    <scope>NUCLEOTIDE SEQUENCE [LARGE SCALE GENOMIC DNA]</scope>
    <source>
        <strain>N315</strain>
    </source>
</reference>
<reference key="2">
    <citation type="journal article" date="2005" name="J. Microbiol. Methods">
        <title>Correlation of proteomic and transcriptomic profiles of Staphylococcus aureus during the post-exponential phase of growth.</title>
        <authorList>
            <person name="Scherl A."/>
            <person name="Francois P."/>
            <person name="Bento M."/>
            <person name="Deshusses J.M."/>
            <person name="Charbonnier Y."/>
            <person name="Converset V."/>
            <person name="Huyghe A."/>
            <person name="Walter N."/>
            <person name="Hoogland C."/>
            <person name="Appel R.D."/>
            <person name="Sanchez J.-C."/>
            <person name="Zimmermann-Ivol C.G."/>
            <person name="Corthals G.L."/>
            <person name="Hochstrasser D.F."/>
            <person name="Schrenzel J."/>
        </authorList>
    </citation>
    <scope>IDENTIFICATION BY MASS SPECTROMETRY</scope>
    <source>
        <strain>N315</strain>
    </source>
</reference>
<name>GCH4_STAAN</name>
<gene>
    <name evidence="1" type="primary">folE2</name>
    <name type="ordered locus">SA0524</name>
</gene>
<protein>
    <recommendedName>
        <fullName evidence="1">GTP cyclohydrolase FolE2</fullName>
        <ecNumber evidence="1">3.5.4.16</ecNumber>
    </recommendedName>
</protein>
<keyword id="KW-0378">Hydrolase</keyword>
<proteinExistence type="evidence at protein level"/>
<organism>
    <name type="scientific">Staphylococcus aureus (strain N315)</name>
    <dbReference type="NCBI Taxonomy" id="158879"/>
    <lineage>
        <taxon>Bacteria</taxon>
        <taxon>Bacillati</taxon>
        <taxon>Bacillota</taxon>
        <taxon>Bacilli</taxon>
        <taxon>Bacillales</taxon>
        <taxon>Staphylococcaceae</taxon>
        <taxon>Staphylococcus</taxon>
    </lineage>
</organism>